<accession>P0C0M6</accession>
<accession>Q8VSV5</accession>
<accession>Q9F7V2</accession>
<dbReference type="EC" id="2.7.11.1" evidence="1"/>
<dbReference type="EMBL" id="AF274004">
    <property type="protein sequence ID" value="AAG23812.1"/>
    <property type="molecule type" value="Genomic_DNA"/>
</dbReference>
<dbReference type="EMBL" id="AF359562">
    <property type="protein sequence ID" value="AAL37942.1"/>
    <property type="molecule type" value="Genomic_DNA"/>
</dbReference>
<dbReference type="RefSeq" id="WP_001829903.1">
    <property type="nucleotide sequence ID" value="NZ_WLVA01000001.1"/>
</dbReference>
<dbReference type="SMR" id="P0C0M6"/>
<dbReference type="GeneID" id="50018230"/>
<dbReference type="OMA" id="KPEYVGV"/>
<dbReference type="OrthoDB" id="9798941at2"/>
<dbReference type="GO" id="GO:0005524">
    <property type="term" value="F:ATP binding"/>
    <property type="evidence" value="ECO:0007669"/>
    <property type="project" value="UniProtKB-KW"/>
</dbReference>
<dbReference type="GO" id="GO:0106310">
    <property type="term" value="F:protein serine kinase activity"/>
    <property type="evidence" value="ECO:0007669"/>
    <property type="project" value="RHEA"/>
</dbReference>
<dbReference type="GO" id="GO:0004674">
    <property type="term" value="F:protein serine/threonine kinase activity"/>
    <property type="evidence" value="ECO:0007669"/>
    <property type="project" value="UniProtKB-KW"/>
</dbReference>
<dbReference type="GO" id="GO:0016989">
    <property type="term" value="F:sigma factor antagonist activity"/>
    <property type="evidence" value="ECO:0007669"/>
    <property type="project" value="InterPro"/>
</dbReference>
<dbReference type="CDD" id="cd16936">
    <property type="entry name" value="HATPase_RsbW-like"/>
    <property type="match status" value="1"/>
</dbReference>
<dbReference type="Gene3D" id="3.30.565.10">
    <property type="entry name" value="Histidine kinase-like ATPase, C-terminal domain"/>
    <property type="match status" value="1"/>
</dbReference>
<dbReference type="HAMAP" id="MF_00638">
    <property type="entry name" value="Anti_sigma_B"/>
    <property type="match status" value="1"/>
</dbReference>
<dbReference type="InterPro" id="IPR050267">
    <property type="entry name" value="Anti-sigma-factor_SerPK"/>
</dbReference>
<dbReference type="InterPro" id="IPR036890">
    <property type="entry name" value="HATPase_C_sf"/>
</dbReference>
<dbReference type="InterPro" id="IPR010193">
    <property type="entry name" value="RsbW"/>
</dbReference>
<dbReference type="NCBIfam" id="NF003144">
    <property type="entry name" value="PRK04069.1"/>
    <property type="match status" value="1"/>
</dbReference>
<dbReference type="NCBIfam" id="TIGR01924">
    <property type="entry name" value="rsbW_low_gc"/>
    <property type="match status" value="1"/>
</dbReference>
<dbReference type="PANTHER" id="PTHR35526">
    <property type="entry name" value="ANTI-SIGMA-F FACTOR RSBW-RELATED"/>
    <property type="match status" value="1"/>
</dbReference>
<dbReference type="PANTHER" id="PTHR35526:SF9">
    <property type="entry name" value="SERINE-PROTEIN KINASE RSBW"/>
    <property type="match status" value="1"/>
</dbReference>
<dbReference type="Pfam" id="PF13581">
    <property type="entry name" value="HATPase_c_2"/>
    <property type="match status" value="1"/>
</dbReference>
<dbReference type="SUPFAM" id="SSF55874">
    <property type="entry name" value="ATPase domain of HSP90 chaperone/DNA topoisomerase II/histidine kinase"/>
    <property type="match status" value="1"/>
</dbReference>
<organism>
    <name type="scientific">Staphylococcus epidermidis</name>
    <dbReference type="NCBI Taxonomy" id="1282"/>
    <lineage>
        <taxon>Bacteria</taxon>
        <taxon>Bacillati</taxon>
        <taxon>Bacillota</taxon>
        <taxon>Bacilli</taxon>
        <taxon>Bacillales</taxon>
        <taxon>Staphylococcaceae</taxon>
        <taxon>Staphylococcus</taxon>
    </lineage>
</organism>
<comment type="function">
    <text evidence="1">Negative regulator of sigma-B activity. Phosphorylates and inactivates its specific antagonist protein, RsbV. Upon phosphorylation of RsbV, RsbW is released and binds to sigma-B, thereby blocking its ability to form an RNA polymerase holoenzyme (E-sigma-B).</text>
</comment>
<comment type="catalytic activity">
    <reaction evidence="1">
        <text>L-seryl-[protein] + ATP = O-phospho-L-seryl-[protein] + ADP + H(+)</text>
        <dbReference type="Rhea" id="RHEA:17989"/>
        <dbReference type="Rhea" id="RHEA-COMP:9863"/>
        <dbReference type="Rhea" id="RHEA-COMP:11604"/>
        <dbReference type="ChEBI" id="CHEBI:15378"/>
        <dbReference type="ChEBI" id="CHEBI:29999"/>
        <dbReference type="ChEBI" id="CHEBI:30616"/>
        <dbReference type="ChEBI" id="CHEBI:83421"/>
        <dbReference type="ChEBI" id="CHEBI:456216"/>
        <dbReference type="EC" id="2.7.11.1"/>
    </reaction>
</comment>
<comment type="catalytic activity">
    <reaction evidence="1">
        <text>L-threonyl-[protein] + ATP = O-phospho-L-threonyl-[protein] + ADP + H(+)</text>
        <dbReference type="Rhea" id="RHEA:46608"/>
        <dbReference type="Rhea" id="RHEA-COMP:11060"/>
        <dbReference type="Rhea" id="RHEA-COMP:11605"/>
        <dbReference type="ChEBI" id="CHEBI:15378"/>
        <dbReference type="ChEBI" id="CHEBI:30013"/>
        <dbReference type="ChEBI" id="CHEBI:30616"/>
        <dbReference type="ChEBI" id="CHEBI:61977"/>
        <dbReference type="ChEBI" id="CHEBI:456216"/>
        <dbReference type="EC" id="2.7.11.1"/>
    </reaction>
</comment>
<comment type="similarity">
    <text evidence="1">Belongs to the anti-sigma-factor family.</text>
</comment>
<name>RSBW_STAEP</name>
<evidence type="ECO:0000255" key="1">
    <source>
        <dbReference type="HAMAP-Rule" id="MF_00638"/>
    </source>
</evidence>
<evidence type="ECO:0000305" key="2"/>
<feature type="chain" id="PRO_0000203545" description="Serine-protein kinase RsbW">
    <location>
        <begin position="1"/>
        <end position="159"/>
    </location>
</feature>
<feature type="sequence conflict" description="In Ref. 2; AAL37942." evidence="2" ref="2">
    <original>I</original>
    <variation>V</variation>
    <location>
        <position position="81"/>
    </location>
</feature>
<feature type="sequence conflict" description="In Ref. 2; AAL37942." evidence="2" ref="2">
    <original>A</original>
    <variation>S</variation>
    <location>
        <position position="94"/>
    </location>
</feature>
<reference key="1">
    <citation type="journal article" date="2001" name="J. Bacteriol.">
        <title>Biofilm formation by Staphylococcus epidermidis depends on functional rsbU, an activator of the sigB operon: differential activation mechanisms due to ethanol and salt stress.</title>
        <authorList>
            <person name="Knobloch J.K.-M."/>
            <person name="Bartscht K."/>
            <person name="Sabottke A."/>
            <person name="Rohde H."/>
            <person name="Feucht H.-H."/>
            <person name="Mack D."/>
        </authorList>
    </citation>
    <scope>NUCLEOTIDE SEQUENCE [GENOMIC DNA]</scope>
    <source>
        <strain>Clinical isolate 1457</strain>
    </source>
</reference>
<reference key="2">
    <citation type="journal article" date="2001" name="Infect. Immun.">
        <title>Identification of the sigB operon in Staphylococcus epidermidis: construction and characterization of a sigB deletion mutant.</title>
        <authorList>
            <person name="Kies S."/>
            <person name="Otto M."/>
            <person name="Vuong C."/>
            <person name="Gotz F."/>
        </authorList>
    </citation>
    <scope>NUCLEOTIDE SEQUENCE [GENOMIC DNA]</scope>
</reference>
<gene>
    <name evidence="1" type="primary">rsbW</name>
</gene>
<keyword id="KW-0067">ATP-binding</keyword>
<keyword id="KW-0418">Kinase</keyword>
<keyword id="KW-0547">Nucleotide-binding</keyword>
<keyword id="KW-0723">Serine/threonine-protein kinase</keyword>
<keyword id="KW-0808">Transferase</keyword>
<protein>
    <recommendedName>
        <fullName evidence="1">Serine-protein kinase RsbW</fullName>
        <ecNumber evidence="1">2.7.11.1</ecNumber>
    </recommendedName>
    <alternativeName>
        <fullName evidence="1">Anti-sigma-B factor</fullName>
    </alternativeName>
    <alternativeName>
        <fullName evidence="1">Sigma-B negative effector RsbW</fullName>
    </alternativeName>
</protein>
<sequence length="159" mass="17922">MQSTQDYIEMRLPASAEYVSLIRLTLSGVFSRAGASYDDIEDSKIAVSEAVTNAVKHAYKKNSEIGMINLCFEIFDDRIKIVISDQGESFDYEATKSHLGPYNDNENIDFLREGGLGLFLIESLMDEVTVYKESGVTISMIKYIKKEQVRNNGERVEIS</sequence>
<proteinExistence type="inferred from homology"/>